<keyword id="KW-0414">Isoprene biosynthesis</keyword>
<keyword id="KW-0464">Manganese</keyword>
<keyword id="KW-0479">Metal-binding</keyword>
<keyword id="KW-0521">NADP</keyword>
<keyword id="KW-0560">Oxidoreductase</keyword>
<keyword id="KW-1185">Reference proteome</keyword>
<protein>
    <recommendedName>
        <fullName evidence="1">1-deoxy-D-xylulose 5-phosphate reductoisomerase</fullName>
        <shortName evidence="1">DXP reductoisomerase</shortName>
        <ecNumber evidence="1">1.1.1.267</ecNumber>
    </recommendedName>
    <alternativeName>
        <fullName evidence="1">1-deoxyxylulose-5-phosphate reductoisomerase</fullName>
    </alternativeName>
    <alternativeName>
        <fullName evidence="1">2-C-methyl-D-erythritol 4-phosphate synthase</fullName>
    </alternativeName>
</protein>
<organism>
    <name type="scientific">Salmonella typhimurium (strain LT2 / SGSC1412 / ATCC 700720)</name>
    <dbReference type="NCBI Taxonomy" id="99287"/>
    <lineage>
        <taxon>Bacteria</taxon>
        <taxon>Pseudomonadati</taxon>
        <taxon>Pseudomonadota</taxon>
        <taxon>Gammaproteobacteria</taxon>
        <taxon>Enterobacterales</taxon>
        <taxon>Enterobacteriaceae</taxon>
        <taxon>Salmonella</taxon>
    </lineage>
</organism>
<name>DXR_SALTY</name>
<feature type="chain" id="PRO_0000163710" description="1-deoxy-D-xylulose 5-phosphate reductoisomerase">
    <location>
        <begin position="1"/>
        <end position="398"/>
    </location>
</feature>
<feature type="binding site" evidence="1">
    <location>
        <position position="10"/>
    </location>
    <ligand>
        <name>NADPH</name>
        <dbReference type="ChEBI" id="CHEBI:57783"/>
    </ligand>
</feature>
<feature type="binding site" evidence="1">
    <location>
        <position position="11"/>
    </location>
    <ligand>
        <name>NADPH</name>
        <dbReference type="ChEBI" id="CHEBI:57783"/>
    </ligand>
</feature>
<feature type="binding site" evidence="1">
    <location>
        <position position="12"/>
    </location>
    <ligand>
        <name>NADPH</name>
        <dbReference type="ChEBI" id="CHEBI:57783"/>
    </ligand>
</feature>
<feature type="binding site" evidence="1">
    <location>
        <position position="13"/>
    </location>
    <ligand>
        <name>NADPH</name>
        <dbReference type="ChEBI" id="CHEBI:57783"/>
    </ligand>
</feature>
<feature type="binding site" evidence="1">
    <location>
        <position position="36"/>
    </location>
    <ligand>
        <name>NADPH</name>
        <dbReference type="ChEBI" id="CHEBI:57783"/>
    </ligand>
</feature>
<feature type="binding site" evidence="1">
    <location>
        <position position="37"/>
    </location>
    <ligand>
        <name>NADPH</name>
        <dbReference type="ChEBI" id="CHEBI:57783"/>
    </ligand>
</feature>
<feature type="binding site" evidence="1">
    <location>
        <position position="38"/>
    </location>
    <ligand>
        <name>NADPH</name>
        <dbReference type="ChEBI" id="CHEBI:57783"/>
    </ligand>
</feature>
<feature type="binding site" evidence="1">
    <location>
        <position position="124"/>
    </location>
    <ligand>
        <name>NADPH</name>
        <dbReference type="ChEBI" id="CHEBI:57783"/>
    </ligand>
</feature>
<feature type="binding site" evidence="1">
    <location>
        <position position="125"/>
    </location>
    <ligand>
        <name>1-deoxy-D-xylulose 5-phosphate</name>
        <dbReference type="ChEBI" id="CHEBI:57792"/>
    </ligand>
</feature>
<feature type="binding site" evidence="1">
    <location>
        <position position="126"/>
    </location>
    <ligand>
        <name>NADPH</name>
        <dbReference type="ChEBI" id="CHEBI:57783"/>
    </ligand>
</feature>
<feature type="binding site" evidence="1">
    <location>
        <position position="150"/>
    </location>
    <ligand>
        <name>Mn(2+)</name>
        <dbReference type="ChEBI" id="CHEBI:29035"/>
    </ligand>
</feature>
<feature type="binding site" evidence="1">
    <location>
        <position position="151"/>
    </location>
    <ligand>
        <name>1-deoxy-D-xylulose 5-phosphate</name>
        <dbReference type="ChEBI" id="CHEBI:57792"/>
    </ligand>
</feature>
<feature type="binding site" evidence="1">
    <location>
        <position position="152"/>
    </location>
    <ligand>
        <name>1-deoxy-D-xylulose 5-phosphate</name>
        <dbReference type="ChEBI" id="CHEBI:57792"/>
    </ligand>
</feature>
<feature type="binding site" evidence="1">
    <location>
        <position position="152"/>
    </location>
    <ligand>
        <name>Mn(2+)</name>
        <dbReference type="ChEBI" id="CHEBI:29035"/>
    </ligand>
</feature>
<feature type="binding site" evidence="1">
    <location>
        <position position="186"/>
    </location>
    <ligand>
        <name>1-deoxy-D-xylulose 5-phosphate</name>
        <dbReference type="ChEBI" id="CHEBI:57792"/>
    </ligand>
</feature>
<feature type="binding site" evidence="1">
    <location>
        <position position="209"/>
    </location>
    <ligand>
        <name>1-deoxy-D-xylulose 5-phosphate</name>
        <dbReference type="ChEBI" id="CHEBI:57792"/>
    </ligand>
</feature>
<feature type="binding site" evidence="1">
    <location>
        <position position="215"/>
    </location>
    <ligand>
        <name>NADPH</name>
        <dbReference type="ChEBI" id="CHEBI:57783"/>
    </ligand>
</feature>
<feature type="binding site" evidence="1">
    <location>
        <position position="222"/>
    </location>
    <ligand>
        <name>1-deoxy-D-xylulose 5-phosphate</name>
        <dbReference type="ChEBI" id="CHEBI:57792"/>
    </ligand>
</feature>
<feature type="binding site" evidence="1">
    <location>
        <position position="227"/>
    </location>
    <ligand>
        <name>1-deoxy-D-xylulose 5-phosphate</name>
        <dbReference type="ChEBI" id="CHEBI:57792"/>
    </ligand>
</feature>
<feature type="binding site" evidence="1">
    <location>
        <position position="228"/>
    </location>
    <ligand>
        <name>1-deoxy-D-xylulose 5-phosphate</name>
        <dbReference type="ChEBI" id="CHEBI:57792"/>
    </ligand>
</feature>
<feature type="binding site" evidence="1">
    <location>
        <position position="231"/>
    </location>
    <ligand>
        <name>1-deoxy-D-xylulose 5-phosphate</name>
        <dbReference type="ChEBI" id="CHEBI:57792"/>
    </ligand>
</feature>
<feature type="binding site" evidence="1">
    <location>
        <position position="231"/>
    </location>
    <ligand>
        <name>Mn(2+)</name>
        <dbReference type="ChEBI" id="CHEBI:29035"/>
    </ligand>
</feature>
<accession>Q8ZRP3</accession>
<comment type="function">
    <text evidence="1">Catalyzes the NADPH-dependent rearrangement and reduction of 1-deoxy-D-xylulose-5-phosphate (DXP) to 2-C-methyl-D-erythritol 4-phosphate (MEP).</text>
</comment>
<comment type="catalytic activity">
    <reaction evidence="1">
        <text>2-C-methyl-D-erythritol 4-phosphate + NADP(+) = 1-deoxy-D-xylulose 5-phosphate + NADPH + H(+)</text>
        <dbReference type="Rhea" id="RHEA:13717"/>
        <dbReference type="ChEBI" id="CHEBI:15378"/>
        <dbReference type="ChEBI" id="CHEBI:57783"/>
        <dbReference type="ChEBI" id="CHEBI:57792"/>
        <dbReference type="ChEBI" id="CHEBI:58262"/>
        <dbReference type="ChEBI" id="CHEBI:58349"/>
        <dbReference type="EC" id="1.1.1.267"/>
    </reaction>
    <physiologicalReaction direction="right-to-left" evidence="1">
        <dbReference type="Rhea" id="RHEA:13719"/>
    </physiologicalReaction>
</comment>
<comment type="cofactor">
    <cofactor evidence="1">
        <name>Mg(2+)</name>
        <dbReference type="ChEBI" id="CHEBI:18420"/>
    </cofactor>
    <cofactor evidence="1">
        <name>Mn(2+)</name>
        <dbReference type="ChEBI" id="CHEBI:29035"/>
    </cofactor>
</comment>
<comment type="pathway">
    <text evidence="1">Isoprenoid biosynthesis; isopentenyl diphosphate biosynthesis via DXP pathway; isopentenyl diphosphate from 1-deoxy-D-xylulose 5-phosphate: step 1/6.</text>
</comment>
<comment type="subunit">
    <text evidence="1">Homodimer.</text>
</comment>
<comment type="similarity">
    <text evidence="1">Belongs to the DXR family.</text>
</comment>
<gene>
    <name evidence="1" type="primary">dxr</name>
    <name type="ordered locus">STM0220</name>
</gene>
<reference key="1">
    <citation type="journal article" date="2001" name="Nature">
        <title>Complete genome sequence of Salmonella enterica serovar Typhimurium LT2.</title>
        <authorList>
            <person name="McClelland M."/>
            <person name="Sanderson K.E."/>
            <person name="Spieth J."/>
            <person name="Clifton S.W."/>
            <person name="Latreille P."/>
            <person name="Courtney L."/>
            <person name="Porwollik S."/>
            <person name="Ali J."/>
            <person name="Dante M."/>
            <person name="Du F."/>
            <person name="Hou S."/>
            <person name="Layman D."/>
            <person name="Leonard S."/>
            <person name="Nguyen C."/>
            <person name="Scott K."/>
            <person name="Holmes A."/>
            <person name="Grewal N."/>
            <person name="Mulvaney E."/>
            <person name="Ryan E."/>
            <person name="Sun H."/>
            <person name="Florea L."/>
            <person name="Miller W."/>
            <person name="Stoneking T."/>
            <person name="Nhan M."/>
            <person name="Waterston R."/>
            <person name="Wilson R.K."/>
        </authorList>
    </citation>
    <scope>NUCLEOTIDE SEQUENCE [LARGE SCALE GENOMIC DNA]</scope>
    <source>
        <strain>LT2 / SGSC1412 / ATCC 700720</strain>
    </source>
</reference>
<evidence type="ECO:0000255" key="1">
    <source>
        <dbReference type="HAMAP-Rule" id="MF_00183"/>
    </source>
</evidence>
<proteinExistence type="inferred from homology"/>
<dbReference type="EC" id="1.1.1.267" evidence="1"/>
<dbReference type="EMBL" id="AE006468">
    <property type="protein sequence ID" value="AAL19184.1"/>
    <property type="molecule type" value="Genomic_DNA"/>
</dbReference>
<dbReference type="RefSeq" id="NP_459225.1">
    <property type="nucleotide sequence ID" value="NC_003197.2"/>
</dbReference>
<dbReference type="SMR" id="Q8ZRP3"/>
<dbReference type="STRING" id="99287.STM0220"/>
<dbReference type="PaxDb" id="99287-STM0220"/>
<dbReference type="GeneID" id="1251738"/>
<dbReference type="KEGG" id="stm:STM0220"/>
<dbReference type="PATRIC" id="fig|99287.12.peg.233"/>
<dbReference type="HOGENOM" id="CLU_035714_4_0_6"/>
<dbReference type="OMA" id="AHPNWVM"/>
<dbReference type="PhylomeDB" id="Q8ZRP3"/>
<dbReference type="BioCyc" id="SENT99287:STM0220-MONOMER"/>
<dbReference type="UniPathway" id="UPA00056">
    <property type="reaction ID" value="UER00092"/>
</dbReference>
<dbReference type="Proteomes" id="UP000001014">
    <property type="component" value="Chromosome"/>
</dbReference>
<dbReference type="GO" id="GO:0030604">
    <property type="term" value="F:1-deoxy-D-xylulose-5-phosphate reductoisomerase activity"/>
    <property type="evidence" value="ECO:0000318"/>
    <property type="project" value="GO_Central"/>
</dbReference>
<dbReference type="GO" id="GO:0030145">
    <property type="term" value="F:manganese ion binding"/>
    <property type="evidence" value="ECO:0000318"/>
    <property type="project" value="GO_Central"/>
</dbReference>
<dbReference type="GO" id="GO:0070402">
    <property type="term" value="F:NADPH binding"/>
    <property type="evidence" value="ECO:0000318"/>
    <property type="project" value="GO_Central"/>
</dbReference>
<dbReference type="GO" id="GO:0051484">
    <property type="term" value="P:isopentenyl diphosphate biosynthetic process, methylerythritol 4-phosphate pathway involved in terpenoid biosynthetic process"/>
    <property type="evidence" value="ECO:0000318"/>
    <property type="project" value="GO_Central"/>
</dbReference>
<dbReference type="FunFam" id="1.10.1740.10:FF:000004">
    <property type="entry name" value="1-deoxy-D-xylulose 5-phosphate reductoisomerase"/>
    <property type="match status" value="1"/>
</dbReference>
<dbReference type="FunFam" id="3.40.50.720:FF:000045">
    <property type="entry name" value="1-deoxy-D-xylulose 5-phosphate reductoisomerase"/>
    <property type="match status" value="1"/>
</dbReference>
<dbReference type="Gene3D" id="1.10.1740.10">
    <property type="match status" value="1"/>
</dbReference>
<dbReference type="Gene3D" id="3.40.50.720">
    <property type="entry name" value="NAD(P)-binding Rossmann-like Domain"/>
    <property type="match status" value="1"/>
</dbReference>
<dbReference type="HAMAP" id="MF_00183">
    <property type="entry name" value="DXP_reductoisom"/>
    <property type="match status" value="1"/>
</dbReference>
<dbReference type="InterPro" id="IPR003821">
    <property type="entry name" value="DXP_reductoisomerase"/>
</dbReference>
<dbReference type="InterPro" id="IPR013644">
    <property type="entry name" value="DXP_reductoisomerase_C"/>
</dbReference>
<dbReference type="InterPro" id="IPR013512">
    <property type="entry name" value="DXP_reductoisomerase_N"/>
</dbReference>
<dbReference type="InterPro" id="IPR026877">
    <property type="entry name" value="DXPR_C"/>
</dbReference>
<dbReference type="InterPro" id="IPR036169">
    <property type="entry name" value="DXPR_C_sf"/>
</dbReference>
<dbReference type="InterPro" id="IPR036291">
    <property type="entry name" value="NAD(P)-bd_dom_sf"/>
</dbReference>
<dbReference type="NCBIfam" id="TIGR00243">
    <property type="entry name" value="Dxr"/>
    <property type="match status" value="1"/>
</dbReference>
<dbReference type="NCBIfam" id="NF003938">
    <property type="entry name" value="PRK05447.1-1"/>
    <property type="match status" value="1"/>
</dbReference>
<dbReference type="NCBIfam" id="NF009114">
    <property type="entry name" value="PRK12464.1"/>
    <property type="match status" value="1"/>
</dbReference>
<dbReference type="PANTHER" id="PTHR30525">
    <property type="entry name" value="1-DEOXY-D-XYLULOSE 5-PHOSPHATE REDUCTOISOMERASE"/>
    <property type="match status" value="1"/>
</dbReference>
<dbReference type="PANTHER" id="PTHR30525:SF0">
    <property type="entry name" value="1-DEOXY-D-XYLULOSE 5-PHOSPHATE REDUCTOISOMERASE, CHLOROPLASTIC"/>
    <property type="match status" value="1"/>
</dbReference>
<dbReference type="Pfam" id="PF08436">
    <property type="entry name" value="DXP_redisom_C"/>
    <property type="match status" value="1"/>
</dbReference>
<dbReference type="Pfam" id="PF02670">
    <property type="entry name" value="DXP_reductoisom"/>
    <property type="match status" value="1"/>
</dbReference>
<dbReference type="Pfam" id="PF13288">
    <property type="entry name" value="DXPR_C"/>
    <property type="match status" value="1"/>
</dbReference>
<dbReference type="PIRSF" id="PIRSF006205">
    <property type="entry name" value="Dxp_reductismrs"/>
    <property type="match status" value="1"/>
</dbReference>
<dbReference type="SUPFAM" id="SSF69055">
    <property type="entry name" value="1-deoxy-D-xylulose-5-phosphate reductoisomerase, C-terminal domain"/>
    <property type="match status" value="1"/>
</dbReference>
<dbReference type="SUPFAM" id="SSF55347">
    <property type="entry name" value="Glyceraldehyde-3-phosphate dehydrogenase-like, C-terminal domain"/>
    <property type="match status" value="1"/>
</dbReference>
<dbReference type="SUPFAM" id="SSF51735">
    <property type="entry name" value="NAD(P)-binding Rossmann-fold domains"/>
    <property type="match status" value="1"/>
</dbReference>
<sequence>MKQLTILGSTGSIGCSTLDVVRHNPDSFRVIALVAGKNVARMAEQCLEFSPRYAVMDDTSSAEQLKIMLQQHGSRTEVLSGQQAACEMAALDEVGHVMAAIVGAAGLLPTLAAIRAGKTILLANKESLVTCGRLFMDEVKRSNARLLPVDSEHNAIFQSLPQSIQHNLGYADLEQNGVTSILLTGSGGPFRETPMCDLAAMTPDQACRHPNWSMGRKISVDSATMMNKGLEYIEARWLFNASARQMEVLIHPQSVIHSMVRYQDGSVLAQLGEPDMRTPIAHTMAWPNRVTSGAQPLDFCKLSALTFSAPDYQRYPCLKLAMEAFEQGQAATTALNAANEITVAAFLAQQIRFTDIAGLNLAVLERMDLQEPASVEDVLQVDAIAREVARKQVIRLSR</sequence>